<gene>
    <name evidence="1" type="primary">queF</name>
    <name type="ordered locus">CGSHiGG_01500</name>
</gene>
<dbReference type="EC" id="1.7.1.13" evidence="1"/>
<dbReference type="EMBL" id="CP000672">
    <property type="protein sequence ID" value="ABQ99381.1"/>
    <property type="molecule type" value="Genomic_DNA"/>
</dbReference>
<dbReference type="SMR" id="A5UF26"/>
<dbReference type="KEGG" id="hiq:CGSHiGG_01500"/>
<dbReference type="HOGENOM" id="CLU_054738_0_0_6"/>
<dbReference type="UniPathway" id="UPA00392"/>
<dbReference type="Proteomes" id="UP000001990">
    <property type="component" value="Chromosome"/>
</dbReference>
<dbReference type="GO" id="GO:0005737">
    <property type="term" value="C:cytoplasm"/>
    <property type="evidence" value="ECO:0007669"/>
    <property type="project" value="UniProtKB-SubCell"/>
</dbReference>
<dbReference type="GO" id="GO:0033739">
    <property type="term" value="F:preQ1 synthase activity"/>
    <property type="evidence" value="ECO:0007669"/>
    <property type="project" value="UniProtKB-UniRule"/>
</dbReference>
<dbReference type="GO" id="GO:0008616">
    <property type="term" value="P:queuosine biosynthetic process"/>
    <property type="evidence" value="ECO:0007669"/>
    <property type="project" value="UniProtKB-UniRule"/>
</dbReference>
<dbReference type="GO" id="GO:0006400">
    <property type="term" value="P:tRNA modification"/>
    <property type="evidence" value="ECO:0007669"/>
    <property type="project" value="UniProtKB-UniRule"/>
</dbReference>
<dbReference type="Gene3D" id="3.30.1130.10">
    <property type="match status" value="2"/>
</dbReference>
<dbReference type="HAMAP" id="MF_00817">
    <property type="entry name" value="QueF_type2"/>
    <property type="match status" value="1"/>
</dbReference>
<dbReference type="InterPro" id="IPR043133">
    <property type="entry name" value="GTP-CH-I_C/QueF"/>
</dbReference>
<dbReference type="InterPro" id="IPR050084">
    <property type="entry name" value="NADPH_dep_7-cyano-7-deazaG_red"/>
</dbReference>
<dbReference type="InterPro" id="IPR029500">
    <property type="entry name" value="QueF"/>
</dbReference>
<dbReference type="InterPro" id="IPR029139">
    <property type="entry name" value="QueF_N"/>
</dbReference>
<dbReference type="InterPro" id="IPR016428">
    <property type="entry name" value="QueF_type2"/>
</dbReference>
<dbReference type="NCBIfam" id="TIGR03138">
    <property type="entry name" value="QueF"/>
    <property type="match status" value="1"/>
</dbReference>
<dbReference type="PANTHER" id="PTHR34354">
    <property type="entry name" value="NADPH-DEPENDENT 7-CYANO-7-DEAZAGUANINE REDUCTASE"/>
    <property type="match status" value="1"/>
</dbReference>
<dbReference type="PANTHER" id="PTHR34354:SF1">
    <property type="entry name" value="NADPH-DEPENDENT 7-CYANO-7-DEAZAGUANINE REDUCTASE"/>
    <property type="match status" value="1"/>
</dbReference>
<dbReference type="Pfam" id="PF14489">
    <property type="entry name" value="QueF"/>
    <property type="match status" value="1"/>
</dbReference>
<dbReference type="Pfam" id="PF14819">
    <property type="entry name" value="QueF_N"/>
    <property type="match status" value="1"/>
</dbReference>
<dbReference type="PIRSF" id="PIRSF004750">
    <property type="entry name" value="Nitrile_oxidored_YqcD_prd"/>
    <property type="match status" value="1"/>
</dbReference>
<dbReference type="SUPFAM" id="SSF55620">
    <property type="entry name" value="Tetrahydrobiopterin biosynthesis enzymes-like"/>
    <property type="match status" value="1"/>
</dbReference>
<feature type="chain" id="PRO_1000062344" description="NADPH-dependent 7-cyano-7-deazaguanine reductase">
    <location>
        <begin position="1"/>
        <end position="279"/>
    </location>
</feature>
<feature type="active site" description="Thioimide intermediate" evidence="1">
    <location>
        <position position="187"/>
    </location>
</feature>
<feature type="active site" description="Proton donor" evidence="1">
    <location>
        <position position="194"/>
    </location>
</feature>
<feature type="binding site" evidence="1">
    <location>
        <begin position="86"/>
        <end position="88"/>
    </location>
    <ligand>
        <name>substrate</name>
    </ligand>
</feature>
<feature type="binding site" evidence="1">
    <location>
        <begin position="88"/>
        <end position="89"/>
    </location>
    <ligand>
        <name>NADPH</name>
        <dbReference type="ChEBI" id="CHEBI:57783"/>
    </ligand>
</feature>
<feature type="binding site" evidence="1">
    <location>
        <begin position="226"/>
        <end position="227"/>
    </location>
    <ligand>
        <name>substrate</name>
    </ligand>
</feature>
<feature type="binding site" evidence="1">
    <location>
        <begin position="255"/>
        <end position="256"/>
    </location>
    <ligand>
        <name>NADPH</name>
        <dbReference type="ChEBI" id="CHEBI:57783"/>
    </ligand>
</feature>
<protein>
    <recommendedName>
        <fullName evidence="1">NADPH-dependent 7-cyano-7-deazaguanine reductase</fullName>
        <ecNumber evidence="1">1.7.1.13</ecNumber>
    </recommendedName>
    <alternativeName>
        <fullName evidence="1">7-cyano-7-carbaguanine reductase</fullName>
    </alternativeName>
    <alternativeName>
        <fullName evidence="1">NADPH-dependent nitrile oxidoreductase</fullName>
    </alternativeName>
    <alternativeName>
        <fullName evidence="1">PreQ(0) reductase</fullName>
    </alternativeName>
</protein>
<comment type="function">
    <text evidence="1">Catalyzes the NADPH-dependent reduction of 7-cyano-7-deazaguanine (preQ0) to 7-aminomethyl-7-deazaguanine (preQ1).</text>
</comment>
<comment type="catalytic activity">
    <reaction evidence="1">
        <text>7-aminomethyl-7-carbaguanine + 2 NADP(+) = 7-cyano-7-deazaguanine + 2 NADPH + 3 H(+)</text>
        <dbReference type="Rhea" id="RHEA:13409"/>
        <dbReference type="ChEBI" id="CHEBI:15378"/>
        <dbReference type="ChEBI" id="CHEBI:45075"/>
        <dbReference type="ChEBI" id="CHEBI:57783"/>
        <dbReference type="ChEBI" id="CHEBI:58349"/>
        <dbReference type="ChEBI" id="CHEBI:58703"/>
        <dbReference type="EC" id="1.7.1.13"/>
    </reaction>
</comment>
<comment type="pathway">
    <text evidence="1">tRNA modification; tRNA-queuosine biosynthesis.</text>
</comment>
<comment type="subunit">
    <text evidence="1">Homodimer.</text>
</comment>
<comment type="subcellular location">
    <subcellularLocation>
        <location evidence="1">Cytoplasm</location>
    </subcellularLocation>
</comment>
<comment type="similarity">
    <text evidence="1">Belongs to the GTP cyclohydrolase I family. QueF type 2 subfamily.</text>
</comment>
<keyword id="KW-0963">Cytoplasm</keyword>
<keyword id="KW-0521">NADP</keyword>
<keyword id="KW-0560">Oxidoreductase</keyword>
<keyword id="KW-0671">Queuosine biosynthesis</keyword>
<proteinExistence type="inferred from homology"/>
<name>QUEF_HAEIG</name>
<accession>A5UF26</accession>
<organism>
    <name type="scientific">Haemophilus influenzae (strain PittGG)</name>
    <dbReference type="NCBI Taxonomy" id="374931"/>
    <lineage>
        <taxon>Bacteria</taxon>
        <taxon>Pseudomonadati</taxon>
        <taxon>Pseudomonadota</taxon>
        <taxon>Gammaproteobacteria</taxon>
        <taxon>Pasteurellales</taxon>
        <taxon>Pasteurellaceae</taxon>
        <taxon>Haemophilus</taxon>
    </lineage>
</organism>
<sequence length="279" mass="32574">MNYQDNSLKSLKLGQKTEYASQYDRTLLQPVPRALNRDGLGITQNQPFTIGADIWTAYEISWLNEKGLPQVAIADIYLDYQSQNLIESKSFKLYLNSFNQSKFTDFNAVQQTMQRDLIECAQGDVKVRLNPVAVYDAQKIEHLQGDCIDEQDIEITSYEFNANWLKDCVSDEIVEEKLVSHLLKSNCLITNQPDWGTLHIHYVGKKINHEKLLRYVVSFRQHNEFHEQCVERIFCDLMHYAKPEKLTVYARYTRRGGLDINPFRSNFENLPENLRLARQ</sequence>
<evidence type="ECO:0000255" key="1">
    <source>
        <dbReference type="HAMAP-Rule" id="MF_00817"/>
    </source>
</evidence>
<reference key="1">
    <citation type="journal article" date="2007" name="Genome Biol.">
        <title>Characterization and modeling of the Haemophilus influenzae core and supragenomes based on the complete genomic sequences of Rd and 12 clinical nontypeable strains.</title>
        <authorList>
            <person name="Hogg J.S."/>
            <person name="Hu F.Z."/>
            <person name="Janto B."/>
            <person name="Boissy R."/>
            <person name="Hayes J."/>
            <person name="Keefe R."/>
            <person name="Post J.C."/>
            <person name="Ehrlich G.D."/>
        </authorList>
    </citation>
    <scope>NUCLEOTIDE SEQUENCE [LARGE SCALE GENOMIC DNA]</scope>
    <source>
        <strain>PittGG</strain>
    </source>
</reference>